<feature type="chain" id="PRO_0000071651" description="Glutathione-regulated potassium-efflux system ancillary protein KefG">
    <location>
        <begin position="1"/>
        <end position="182"/>
    </location>
</feature>
<accession>Q664Q4</accession>
<organism>
    <name type="scientific">Yersinia pseudotuberculosis serotype I (strain IP32953)</name>
    <dbReference type="NCBI Taxonomy" id="273123"/>
    <lineage>
        <taxon>Bacteria</taxon>
        <taxon>Pseudomonadati</taxon>
        <taxon>Pseudomonadota</taxon>
        <taxon>Gammaproteobacteria</taxon>
        <taxon>Enterobacterales</taxon>
        <taxon>Yersiniaceae</taxon>
        <taxon>Yersinia</taxon>
    </lineage>
</organism>
<comment type="function">
    <text evidence="1">Regulatory subunit of a potassium efflux system that confers protection against electrophiles. Required for full activity of KefB.</text>
</comment>
<comment type="catalytic activity">
    <reaction evidence="1">
        <text>a quinone + NADH + H(+) = a quinol + NAD(+)</text>
        <dbReference type="Rhea" id="RHEA:46160"/>
        <dbReference type="ChEBI" id="CHEBI:15378"/>
        <dbReference type="ChEBI" id="CHEBI:24646"/>
        <dbReference type="ChEBI" id="CHEBI:57540"/>
        <dbReference type="ChEBI" id="CHEBI:57945"/>
        <dbReference type="ChEBI" id="CHEBI:132124"/>
        <dbReference type="EC" id="1.6.5.2"/>
    </reaction>
</comment>
<comment type="catalytic activity">
    <reaction evidence="1">
        <text>a quinone + NADPH + H(+) = a quinol + NADP(+)</text>
        <dbReference type="Rhea" id="RHEA:46164"/>
        <dbReference type="ChEBI" id="CHEBI:15378"/>
        <dbReference type="ChEBI" id="CHEBI:24646"/>
        <dbReference type="ChEBI" id="CHEBI:57783"/>
        <dbReference type="ChEBI" id="CHEBI:58349"/>
        <dbReference type="ChEBI" id="CHEBI:132124"/>
        <dbReference type="EC" id="1.6.5.2"/>
    </reaction>
</comment>
<comment type="subunit">
    <text evidence="1">Interacts with KefB.</text>
</comment>
<comment type="subcellular location">
    <subcellularLocation>
        <location evidence="1">Cell inner membrane</location>
        <topology evidence="1">Peripheral membrane protein</topology>
        <orientation evidence="1">Cytoplasmic side</orientation>
    </subcellularLocation>
</comment>
<comment type="similarity">
    <text evidence="1">Belongs to the NAD(P)H dehydrogenase (quinone) family. KefG subfamily.</text>
</comment>
<protein>
    <recommendedName>
        <fullName evidence="1">Glutathione-regulated potassium-efflux system ancillary protein KefG</fullName>
    </recommendedName>
    <alternativeName>
        <fullName evidence="1">Putative quinone oxidoreductase KefG</fullName>
        <ecNumber evidence="1">1.6.5.2</ecNumber>
    </alternativeName>
</protein>
<evidence type="ECO:0000255" key="1">
    <source>
        <dbReference type="HAMAP-Rule" id="MF_01415"/>
    </source>
</evidence>
<proteinExistence type="inferred from homology"/>
<reference key="1">
    <citation type="journal article" date="2004" name="Proc. Natl. Acad. Sci. U.S.A.">
        <title>Insights into the evolution of Yersinia pestis through whole-genome comparison with Yersinia pseudotuberculosis.</title>
        <authorList>
            <person name="Chain P.S.G."/>
            <person name="Carniel E."/>
            <person name="Larimer F.W."/>
            <person name="Lamerdin J."/>
            <person name="Stoutland P.O."/>
            <person name="Regala W.M."/>
            <person name="Georgescu A.M."/>
            <person name="Vergez L.M."/>
            <person name="Land M.L."/>
            <person name="Motin V.L."/>
            <person name="Brubaker R.R."/>
            <person name="Fowler J."/>
            <person name="Hinnebusch J."/>
            <person name="Marceau M."/>
            <person name="Medigue C."/>
            <person name="Simonet M."/>
            <person name="Chenal-Francisque V."/>
            <person name="Souza B."/>
            <person name="Dacheux D."/>
            <person name="Elliott J.M."/>
            <person name="Derbise A."/>
            <person name="Hauser L.J."/>
            <person name="Garcia E."/>
        </authorList>
    </citation>
    <scope>NUCLEOTIDE SEQUENCE [LARGE SCALE GENOMIC DNA]</scope>
    <source>
        <strain>IP32953</strain>
    </source>
</reference>
<name>KEFG_YERPS</name>
<dbReference type="EC" id="1.6.5.2" evidence="1"/>
<dbReference type="EMBL" id="BX936398">
    <property type="protein sequence ID" value="CAH22953.1"/>
    <property type="molecule type" value="Genomic_DNA"/>
</dbReference>
<dbReference type="RefSeq" id="WP_002215966.1">
    <property type="nucleotide sequence ID" value="NZ_CP009712.1"/>
</dbReference>
<dbReference type="SMR" id="Q664Q4"/>
<dbReference type="GeneID" id="57974413"/>
<dbReference type="KEGG" id="ypo:BZ17_2872"/>
<dbReference type="KEGG" id="yps:YPTB3715"/>
<dbReference type="PATRIC" id="fig|273123.14.peg.3013"/>
<dbReference type="Proteomes" id="UP000001011">
    <property type="component" value="Chromosome"/>
</dbReference>
<dbReference type="GO" id="GO:0005886">
    <property type="term" value="C:plasma membrane"/>
    <property type="evidence" value="ECO:0007669"/>
    <property type="project" value="UniProtKB-SubCell"/>
</dbReference>
<dbReference type="GO" id="GO:0009055">
    <property type="term" value="F:electron transfer activity"/>
    <property type="evidence" value="ECO:0007669"/>
    <property type="project" value="TreeGrafter"/>
</dbReference>
<dbReference type="GO" id="GO:0010181">
    <property type="term" value="F:FMN binding"/>
    <property type="evidence" value="ECO:0007669"/>
    <property type="project" value="TreeGrafter"/>
</dbReference>
<dbReference type="GO" id="GO:0050136">
    <property type="term" value="F:NADH:ubiquinone reductase (non-electrogenic) activity"/>
    <property type="evidence" value="ECO:0007669"/>
    <property type="project" value="RHEA"/>
</dbReference>
<dbReference type="GO" id="GO:0008753">
    <property type="term" value="F:NADPH dehydrogenase (quinone) activity"/>
    <property type="evidence" value="ECO:0007669"/>
    <property type="project" value="RHEA"/>
</dbReference>
<dbReference type="GO" id="GO:1901381">
    <property type="term" value="P:positive regulation of potassium ion transmembrane transport"/>
    <property type="evidence" value="ECO:0007669"/>
    <property type="project" value="UniProtKB-UniRule"/>
</dbReference>
<dbReference type="GO" id="GO:0006813">
    <property type="term" value="P:potassium ion transport"/>
    <property type="evidence" value="ECO:0007669"/>
    <property type="project" value="InterPro"/>
</dbReference>
<dbReference type="FunFam" id="3.40.50.360:FF:000013">
    <property type="entry name" value="Glutathione-regulated potassium-efflux system ancillary protein KefG"/>
    <property type="match status" value="1"/>
</dbReference>
<dbReference type="Gene3D" id="3.40.50.360">
    <property type="match status" value="1"/>
</dbReference>
<dbReference type="HAMAP" id="MF_01415">
    <property type="entry name" value="K_H_efflux_KefG"/>
    <property type="match status" value="1"/>
</dbReference>
<dbReference type="InterPro" id="IPR003680">
    <property type="entry name" value="Flavodoxin_fold"/>
</dbReference>
<dbReference type="InterPro" id="IPR029039">
    <property type="entry name" value="Flavoprotein-like_sf"/>
</dbReference>
<dbReference type="InterPro" id="IPR023947">
    <property type="entry name" value="K_H_efflux_KefG"/>
</dbReference>
<dbReference type="InterPro" id="IPR046980">
    <property type="entry name" value="KefG/KefF"/>
</dbReference>
<dbReference type="NCBIfam" id="NF003430">
    <property type="entry name" value="PRK04930.1"/>
    <property type="match status" value="1"/>
</dbReference>
<dbReference type="PANTHER" id="PTHR47307">
    <property type="entry name" value="GLUTATHIONE-REGULATED POTASSIUM-EFFLUX SYSTEM ANCILLARY PROTEIN KEFG"/>
    <property type="match status" value="1"/>
</dbReference>
<dbReference type="PANTHER" id="PTHR47307:SF1">
    <property type="entry name" value="GLUTATHIONE-REGULATED POTASSIUM-EFFLUX SYSTEM ANCILLARY PROTEIN KEFG"/>
    <property type="match status" value="1"/>
</dbReference>
<dbReference type="Pfam" id="PF02525">
    <property type="entry name" value="Flavodoxin_2"/>
    <property type="match status" value="1"/>
</dbReference>
<dbReference type="SUPFAM" id="SSF52218">
    <property type="entry name" value="Flavoproteins"/>
    <property type="match status" value="1"/>
</dbReference>
<gene>
    <name evidence="1" type="primary">kefG</name>
    <name type="ordered locus">YPTB3715</name>
</gene>
<sequence length="182" mass="21200">MLQPPKVLLLYAHPESQDSVANRVLLQPVQQLEHVTVHDLYAHYPDFFIDIHHEQQLLRDHQVIVFQHPLYTYSCPALLKEWLDRVLARGFANGVGGHALTGKHWRSVITTGEQEGTYRIGGYNRYPMEDILRPFELTAAMCHMHWINPMIIYWARRQKPETLASHAQAYVQWLQSPLTRGL</sequence>
<keyword id="KW-0997">Cell inner membrane</keyword>
<keyword id="KW-1003">Cell membrane</keyword>
<keyword id="KW-0472">Membrane</keyword>
<keyword id="KW-0520">NAD</keyword>
<keyword id="KW-0560">Oxidoreductase</keyword>